<dbReference type="EC" id="2.4.-.-"/>
<dbReference type="EMBL" id="X73124">
    <property type="protein sequence ID" value="CAA51612.1"/>
    <property type="molecule type" value="Genomic_DNA"/>
</dbReference>
<dbReference type="EMBL" id="AL009126">
    <property type="protein sequence ID" value="CAB15824.1"/>
    <property type="molecule type" value="Genomic_DNA"/>
</dbReference>
<dbReference type="PIR" id="S39711">
    <property type="entry name" value="S39711"/>
</dbReference>
<dbReference type="RefSeq" id="NP_391677.1">
    <property type="nucleotide sequence ID" value="NC_000964.3"/>
</dbReference>
<dbReference type="RefSeq" id="WP_003242519.1">
    <property type="nucleotide sequence ID" value="NZ_OZ025638.1"/>
</dbReference>
<dbReference type="FunCoup" id="P39614">
    <property type="interactions" value="304"/>
</dbReference>
<dbReference type="STRING" id="224308.BSU37980"/>
<dbReference type="CAZy" id="GT2">
    <property type="family name" value="Glycosyltransferase Family 2"/>
</dbReference>
<dbReference type="PaxDb" id="224308-BSU37980"/>
<dbReference type="EnsemblBacteria" id="CAB15824">
    <property type="protein sequence ID" value="CAB15824"/>
    <property type="gene ID" value="BSU_37980"/>
</dbReference>
<dbReference type="GeneID" id="937259"/>
<dbReference type="KEGG" id="bsu:BSU37980"/>
<dbReference type="PATRIC" id="fig|224308.179.peg.4112"/>
<dbReference type="eggNOG" id="COG1216">
    <property type="taxonomic scope" value="Bacteria"/>
</dbReference>
<dbReference type="InParanoid" id="P39614"/>
<dbReference type="OrthoDB" id="396512at2"/>
<dbReference type="PhylomeDB" id="P39614"/>
<dbReference type="BioCyc" id="BSUB:BSU37980-MONOMER"/>
<dbReference type="Proteomes" id="UP000001570">
    <property type="component" value="Chromosome"/>
</dbReference>
<dbReference type="GO" id="GO:0016757">
    <property type="term" value="F:glycosyltransferase activity"/>
    <property type="evidence" value="ECO:0000318"/>
    <property type="project" value="GO_Central"/>
</dbReference>
<dbReference type="CDD" id="cd00761">
    <property type="entry name" value="Glyco_tranf_GTA_type"/>
    <property type="match status" value="1"/>
</dbReference>
<dbReference type="FunFam" id="3.90.550.10:FF:000306">
    <property type="entry name" value="Uncharacterized glycosyltransferase YwdF"/>
    <property type="match status" value="1"/>
</dbReference>
<dbReference type="Gene3D" id="3.90.550.10">
    <property type="entry name" value="Spore Coat Polysaccharide Biosynthesis Protein SpsA, Chain A"/>
    <property type="match status" value="1"/>
</dbReference>
<dbReference type="InterPro" id="IPR001173">
    <property type="entry name" value="Glyco_trans_2-like"/>
</dbReference>
<dbReference type="InterPro" id="IPR050834">
    <property type="entry name" value="Glycosyltransf_2"/>
</dbReference>
<dbReference type="InterPro" id="IPR029044">
    <property type="entry name" value="Nucleotide-diphossugar_trans"/>
</dbReference>
<dbReference type="PANTHER" id="PTHR43685">
    <property type="entry name" value="GLYCOSYLTRANSFERASE"/>
    <property type="match status" value="1"/>
</dbReference>
<dbReference type="PANTHER" id="PTHR43685:SF2">
    <property type="entry name" value="GLYCOSYLTRANSFERASE 2-LIKE DOMAIN-CONTAINING PROTEIN"/>
    <property type="match status" value="1"/>
</dbReference>
<dbReference type="Pfam" id="PF00535">
    <property type="entry name" value="Glycos_transf_2"/>
    <property type="match status" value="1"/>
</dbReference>
<dbReference type="SUPFAM" id="SSF53448">
    <property type="entry name" value="Nucleotide-diphospho-sugar transferases"/>
    <property type="match status" value="1"/>
</dbReference>
<organism>
    <name type="scientific">Bacillus subtilis (strain 168)</name>
    <dbReference type="NCBI Taxonomy" id="224308"/>
    <lineage>
        <taxon>Bacteria</taxon>
        <taxon>Bacillati</taxon>
        <taxon>Bacillota</taxon>
        <taxon>Bacilli</taxon>
        <taxon>Bacillales</taxon>
        <taxon>Bacillaceae</taxon>
        <taxon>Bacillus</taxon>
    </lineage>
</organism>
<protein>
    <recommendedName>
        <fullName>Uncharacterized glycosyltransferase YwdF</fullName>
        <ecNumber>2.4.-.-</ecNumber>
    </recommendedName>
</protein>
<accession>P39614</accession>
<reference key="1">
    <citation type="journal article" date="1993" name="Mol. Microbiol.">
        <title>Bacillus subtilis genome project: cloning and sequencing of the 97 kb region from 325 degrees to 333 degrees.</title>
        <authorList>
            <person name="Glaser P."/>
            <person name="Kunst F."/>
            <person name="Arnaud M."/>
            <person name="Coudart M.P."/>
            <person name="Gonzales W."/>
            <person name="Hullo M.-F."/>
            <person name="Ionescu M."/>
            <person name="Lubochinsky B."/>
            <person name="Marcelino L."/>
            <person name="Moszer I."/>
            <person name="Presecan E."/>
            <person name="Santana M."/>
            <person name="Schneider E."/>
            <person name="Schweizer J."/>
            <person name="Vertes A."/>
            <person name="Rapoport G."/>
            <person name="Danchin A."/>
        </authorList>
    </citation>
    <scope>NUCLEOTIDE SEQUENCE [GENOMIC DNA]</scope>
    <source>
        <strain>168</strain>
    </source>
</reference>
<reference key="2">
    <citation type="journal article" date="1997" name="Nature">
        <title>The complete genome sequence of the Gram-positive bacterium Bacillus subtilis.</title>
        <authorList>
            <person name="Kunst F."/>
            <person name="Ogasawara N."/>
            <person name="Moszer I."/>
            <person name="Albertini A.M."/>
            <person name="Alloni G."/>
            <person name="Azevedo V."/>
            <person name="Bertero M.G."/>
            <person name="Bessieres P."/>
            <person name="Bolotin A."/>
            <person name="Borchert S."/>
            <person name="Borriss R."/>
            <person name="Boursier L."/>
            <person name="Brans A."/>
            <person name="Braun M."/>
            <person name="Brignell S.C."/>
            <person name="Bron S."/>
            <person name="Brouillet S."/>
            <person name="Bruschi C.V."/>
            <person name="Caldwell B."/>
            <person name="Capuano V."/>
            <person name="Carter N.M."/>
            <person name="Choi S.-K."/>
            <person name="Codani J.-J."/>
            <person name="Connerton I.F."/>
            <person name="Cummings N.J."/>
            <person name="Daniel R.A."/>
            <person name="Denizot F."/>
            <person name="Devine K.M."/>
            <person name="Duesterhoeft A."/>
            <person name="Ehrlich S.D."/>
            <person name="Emmerson P.T."/>
            <person name="Entian K.-D."/>
            <person name="Errington J."/>
            <person name="Fabret C."/>
            <person name="Ferrari E."/>
            <person name="Foulger D."/>
            <person name="Fritz C."/>
            <person name="Fujita M."/>
            <person name="Fujita Y."/>
            <person name="Fuma S."/>
            <person name="Galizzi A."/>
            <person name="Galleron N."/>
            <person name="Ghim S.-Y."/>
            <person name="Glaser P."/>
            <person name="Goffeau A."/>
            <person name="Golightly E.J."/>
            <person name="Grandi G."/>
            <person name="Guiseppi G."/>
            <person name="Guy B.J."/>
            <person name="Haga K."/>
            <person name="Haiech J."/>
            <person name="Harwood C.R."/>
            <person name="Henaut A."/>
            <person name="Hilbert H."/>
            <person name="Holsappel S."/>
            <person name="Hosono S."/>
            <person name="Hullo M.-F."/>
            <person name="Itaya M."/>
            <person name="Jones L.-M."/>
            <person name="Joris B."/>
            <person name="Karamata D."/>
            <person name="Kasahara Y."/>
            <person name="Klaerr-Blanchard M."/>
            <person name="Klein C."/>
            <person name="Kobayashi Y."/>
            <person name="Koetter P."/>
            <person name="Koningstein G."/>
            <person name="Krogh S."/>
            <person name="Kumano M."/>
            <person name="Kurita K."/>
            <person name="Lapidus A."/>
            <person name="Lardinois S."/>
            <person name="Lauber J."/>
            <person name="Lazarevic V."/>
            <person name="Lee S.-M."/>
            <person name="Levine A."/>
            <person name="Liu H."/>
            <person name="Masuda S."/>
            <person name="Mauel C."/>
            <person name="Medigue C."/>
            <person name="Medina N."/>
            <person name="Mellado R.P."/>
            <person name="Mizuno M."/>
            <person name="Moestl D."/>
            <person name="Nakai S."/>
            <person name="Noback M."/>
            <person name="Noone D."/>
            <person name="O'Reilly M."/>
            <person name="Ogawa K."/>
            <person name="Ogiwara A."/>
            <person name="Oudega B."/>
            <person name="Park S.-H."/>
            <person name="Parro V."/>
            <person name="Pohl T.M."/>
            <person name="Portetelle D."/>
            <person name="Porwollik S."/>
            <person name="Prescott A.M."/>
            <person name="Presecan E."/>
            <person name="Pujic P."/>
            <person name="Purnelle B."/>
            <person name="Rapoport G."/>
            <person name="Rey M."/>
            <person name="Reynolds S."/>
            <person name="Rieger M."/>
            <person name="Rivolta C."/>
            <person name="Rocha E."/>
            <person name="Roche B."/>
            <person name="Rose M."/>
            <person name="Sadaie Y."/>
            <person name="Sato T."/>
            <person name="Scanlan E."/>
            <person name="Schleich S."/>
            <person name="Schroeter R."/>
            <person name="Scoffone F."/>
            <person name="Sekiguchi J."/>
            <person name="Sekowska A."/>
            <person name="Seror S.J."/>
            <person name="Serror P."/>
            <person name="Shin B.-S."/>
            <person name="Soldo B."/>
            <person name="Sorokin A."/>
            <person name="Tacconi E."/>
            <person name="Takagi T."/>
            <person name="Takahashi H."/>
            <person name="Takemaru K."/>
            <person name="Takeuchi M."/>
            <person name="Tamakoshi A."/>
            <person name="Tanaka T."/>
            <person name="Terpstra P."/>
            <person name="Tognoni A."/>
            <person name="Tosato V."/>
            <person name="Uchiyama S."/>
            <person name="Vandenbol M."/>
            <person name="Vannier F."/>
            <person name="Vassarotti A."/>
            <person name="Viari A."/>
            <person name="Wambutt R."/>
            <person name="Wedler E."/>
            <person name="Wedler H."/>
            <person name="Weitzenegger T."/>
            <person name="Winters P."/>
            <person name="Wipat A."/>
            <person name="Yamamoto H."/>
            <person name="Yamane K."/>
            <person name="Yasumoto K."/>
            <person name="Yata K."/>
            <person name="Yoshida K."/>
            <person name="Yoshikawa H.-F."/>
            <person name="Zumstein E."/>
            <person name="Yoshikawa H."/>
            <person name="Danchin A."/>
        </authorList>
    </citation>
    <scope>NUCLEOTIDE SEQUENCE [LARGE SCALE GENOMIC DNA]</scope>
    <source>
        <strain>168</strain>
    </source>
</reference>
<proteinExistence type="inferred from homology"/>
<gene>
    <name type="primary">ywdF</name>
    <name type="ordered locus">BSU37980</name>
    <name type="ORF">ipa-56d</name>
</gene>
<keyword id="KW-0328">Glycosyltransferase</keyword>
<keyword id="KW-1185">Reference proteome</keyword>
<keyword id="KW-0808">Transferase</keyword>
<feature type="chain" id="PRO_0000059237" description="Uncharacterized glycosyltransferase YwdF">
    <location>
        <begin position="1"/>
        <end position="268"/>
    </location>
</feature>
<sequence length="268" mass="30617">MKISIVIVTYNRIPALCELLESISRQTLMPYEIIIVNDAGESVVPVKALYPELPIAVINLEKNSGHVAARNAGVKEASGDCIMLCDDDDFFTPGHIEKMAKEIETADFVHSDAEIVSFEEKNGTRYPVSRKLFAYTADYEDMRVFSTYVPSGSMYRRFLHDEIGYFDADVHNYWDWDFYLRAAKDYRVKRVPCASVIYAFSDAGDNQSADLGAKRKQYLDRLSEKHGLGELPTKNFAVLLEEPEMKRREAKSEMVWDGEPVYSRLHRS</sequence>
<comment type="similarity">
    <text evidence="1">Belongs to the glycosyltransferase 2 family.</text>
</comment>
<name>YWDF_BACSU</name>
<evidence type="ECO:0000305" key="1"/>